<sequence length="177" mass="19152">MSRIGKKPVPVPAGVTASVEGQTVKAKGAKGELSFVVHDEVLVKMEDGAVRVDPRDQSKEARSKWGMSRTMISNIFVGVKDGFEKKLEISGVGYRAAMQGKNLQLSLGFSHEVVYDVPAGITVAVPKPTEIVVTGIDKQQVGQVAAEIREYRGPEPYKGKGVKYAGEKIVRKEGKKK</sequence>
<proteinExistence type="inferred from homology"/>
<gene>
    <name evidence="1" type="primary">rplF</name>
    <name type="ordered locus">BMEA_A1263</name>
</gene>
<accession>C0RJI6</accession>
<name>RL6_BRUMB</name>
<organism>
    <name type="scientific">Brucella melitensis biotype 2 (strain ATCC 23457)</name>
    <dbReference type="NCBI Taxonomy" id="546272"/>
    <lineage>
        <taxon>Bacteria</taxon>
        <taxon>Pseudomonadati</taxon>
        <taxon>Pseudomonadota</taxon>
        <taxon>Alphaproteobacteria</taxon>
        <taxon>Hyphomicrobiales</taxon>
        <taxon>Brucellaceae</taxon>
        <taxon>Brucella/Ochrobactrum group</taxon>
        <taxon>Brucella</taxon>
    </lineage>
</organism>
<reference key="1">
    <citation type="submission" date="2009-03" db="EMBL/GenBank/DDBJ databases">
        <title>Brucella melitensis ATCC 23457 whole genome shotgun sequencing project.</title>
        <authorList>
            <person name="Setubal J.C."/>
            <person name="Boyle S."/>
            <person name="Crasta O.R."/>
            <person name="Gillespie J.J."/>
            <person name="Kenyon R.W."/>
            <person name="Lu J."/>
            <person name="Mane S."/>
            <person name="Nagrani S."/>
            <person name="Shallom J.M."/>
            <person name="Shallom S."/>
            <person name="Shukla M."/>
            <person name="Snyder E.E."/>
            <person name="Sobral B.W."/>
            <person name="Wattam A.R."/>
            <person name="Will R."/>
            <person name="Williams K."/>
            <person name="Yoo H."/>
            <person name="Munk C."/>
            <person name="Tapia R."/>
            <person name="Han C."/>
            <person name="Detter J.C."/>
            <person name="Bruce D."/>
            <person name="Brettin T.S."/>
        </authorList>
    </citation>
    <scope>NUCLEOTIDE SEQUENCE [LARGE SCALE GENOMIC DNA]</scope>
    <source>
        <strain>ATCC 23457</strain>
    </source>
</reference>
<feature type="chain" id="PRO_1000166794" description="Large ribosomal subunit protein uL6">
    <location>
        <begin position="1"/>
        <end position="177"/>
    </location>
</feature>
<keyword id="KW-0687">Ribonucleoprotein</keyword>
<keyword id="KW-0689">Ribosomal protein</keyword>
<keyword id="KW-0694">RNA-binding</keyword>
<keyword id="KW-0699">rRNA-binding</keyword>
<evidence type="ECO:0000255" key="1">
    <source>
        <dbReference type="HAMAP-Rule" id="MF_01365"/>
    </source>
</evidence>
<evidence type="ECO:0000305" key="2"/>
<comment type="function">
    <text evidence="1">This protein binds to the 23S rRNA, and is important in its secondary structure. It is located near the subunit interface in the base of the L7/L12 stalk, and near the tRNA binding site of the peptidyltransferase center.</text>
</comment>
<comment type="subunit">
    <text evidence="1">Part of the 50S ribosomal subunit.</text>
</comment>
<comment type="similarity">
    <text evidence="1">Belongs to the universal ribosomal protein uL6 family.</text>
</comment>
<protein>
    <recommendedName>
        <fullName evidence="1">Large ribosomal subunit protein uL6</fullName>
    </recommendedName>
    <alternativeName>
        <fullName evidence="2">50S ribosomal protein L6</fullName>
    </alternativeName>
</protein>
<dbReference type="EMBL" id="CP001488">
    <property type="protein sequence ID" value="ACO00994.1"/>
    <property type="molecule type" value="Genomic_DNA"/>
</dbReference>
<dbReference type="RefSeq" id="WP_004683920.1">
    <property type="nucleotide sequence ID" value="NC_012441.1"/>
</dbReference>
<dbReference type="SMR" id="C0RJI6"/>
<dbReference type="GeneID" id="97533539"/>
<dbReference type="KEGG" id="bmi:BMEA_A1263"/>
<dbReference type="HOGENOM" id="CLU_065464_1_2_5"/>
<dbReference type="Proteomes" id="UP000001748">
    <property type="component" value="Chromosome I"/>
</dbReference>
<dbReference type="GO" id="GO:0022625">
    <property type="term" value="C:cytosolic large ribosomal subunit"/>
    <property type="evidence" value="ECO:0007669"/>
    <property type="project" value="TreeGrafter"/>
</dbReference>
<dbReference type="GO" id="GO:0019843">
    <property type="term" value="F:rRNA binding"/>
    <property type="evidence" value="ECO:0007669"/>
    <property type="project" value="UniProtKB-UniRule"/>
</dbReference>
<dbReference type="GO" id="GO:0003735">
    <property type="term" value="F:structural constituent of ribosome"/>
    <property type="evidence" value="ECO:0007669"/>
    <property type="project" value="InterPro"/>
</dbReference>
<dbReference type="GO" id="GO:0002181">
    <property type="term" value="P:cytoplasmic translation"/>
    <property type="evidence" value="ECO:0007669"/>
    <property type="project" value="TreeGrafter"/>
</dbReference>
<dbReference type="FunFam" id="3.90.930.12:FF:000001">
    <property type="entry name" value="50S ribosomal protein L6"/>
    <property type="match status" value="1"/>
</dbReference>
<dbReference type="Gene3D" id="3.90.930.12">
    <property type="entry name" value="Ribosomal protein L6, alpha-beta domain"/>
    <property type="match status" value="2"/>
</dbReference>
<dbReference type="HAMAP" id="MF_01365_B">
    <property type="entry name" value="Ribosomal_uL6_B"/>
    <property type="match status" value="1"/>
</dbReference>
<dbReference type="InterPro" id="IPR000702">
    <property type="entry name" value="Ribosomal_uL6-like"/>
</dbReference>
<dbReference type="InterPro" id="IPR036789">
    <property type="entry name" value="Ribosomal_uL6-like_a/b-dom_sf"/>
</dbReference>
<dbReference type="InterPro" id="IPR020040">
    <property type="entry name" value="Ribosomal_uL6_a/b-dom"/>
</dbReference>
<dbReference type="InterPro" id="IPR019906">
    <property type="entry name" value="Ribosomal_uL6_bac-type"/>
</dbReference>
<dbReference type="InterPro" id="IPR002358">
    <property type="entry name" value="Ribosomal_uL6_CS"/>
</dbReference>
<dbReference type="NCBIfam" id="TIGR03654">
    <property type="entry name" value="L6_bact"/>
    <property type="match status" value="1"/>
</dbReference>
<dbReference type="PANTHER" id="PTHR11655">
    <property type="entry name" value="60S/50S RIBOSOMAL PROTEIN L6/L9"/>
    <property type="match status" value="1"/>
</dbReference>
<dbReference type="PANTHER" id="PTHR11655:SF14">
    <property type="entry name" value="LARGE RIBOSOMAL SUBUNIT PROTEIN UL6M"/>
    <property type="match status" value="1"/>
</dbReference>
<dbReference type="Pfam" id="PF00347">
    <property type="entry name" value="Ribosomal_L6"/>
    <property type="match status" value="2"/>
</dbReference>
<dbReference type="PIRSF" id="PIRSF002162">
    <property type="entry name" value="Ribosomal_L6"/>
    <property type="match status" value="1"/>
</dbReference>
<dbReference type="PRINTS" id="PR00059">
    <property type="entry name" value="RIBOSOMALL6"/>
</dbReference>
<dbReference type="SUPFAM" id="SSF56053">
    <property type="entry name" value="Ribosomal protein L6"/>
    <property type="match status" value="2"/>
</dbReference>
<dbReference type="PROSITE" id="PS00525">
    <property type="entry name" value="RIBOSOMAL_L6_1"/>
    <property type="match status" value="1"/>
</dbReference>